<protein>
    <recommendedName>
        <fullName>Hemoglobin subunit beta-A</fullName>
    </recommendedName>
    <alternativeName>
        <fullName>Alanine beta-globin</fullName>
    </alternativeName>
    <alternativeName>
        <fullName>Beta-A-globin</fullName>
    </alternativeName>
    <alternativeName>
        <fullName>Hemoglobin beta-A chain</fullName>
    </alternativeName>
</protein>
<feature type="chain" id="PRO_0000052909" description="Hemoglobin subunit beta-A">
    <location>
        <begin position="1"/>
        <end position="145"/>
    </location>
</feature>
<feature type="domain" description="Globin" evidence="1">
    <location>
        <begin position="1"/>
        <end position="145"/>
    </location>
</feature>
<feature type="binding site" description="distal binding residue">
    <location>
        <position position="62"/>
    </location>
    <ligand>
        <name>heme b</name>
        <dbReference type="ChEBI" id="CHEBI:60344"/>
    </ligand>
    <ligandPart>
        <name>Fe</name>
        <dbReference type="ChEBI" id="CHEBI:18248"/>
    </ligandPart>
</feature>
<feature type="binding site" description="proximal binding residue">
    <location>
        <position position="91"/>
    </location>
    <ligand>
        <name>heme b</name>
        <dbReference type="ChEBI" id="CHEBI:60344"/>
    </ligand>
    <ligandPart>
        <name>Fe</name>
        <dbReference type="ChEBI" id="CHEBI:18248"/>
    </ligandPart>
</feature>
<feature type="sequence variant" description="In allele D." evidence="3">
    <original>D</original>
    <variation>H</variation>
    <location>
        <position position="20"/>
    </location>
</feature>
<feature type="sequence variant" description="In allele E." evidence="2">
    <original>Q</original>
    <variation>H</variation>
    <location>
        <position position="86"/>
    </location>
</feature>
<feature type="sequence variant" description="In allele E." evidence="2">
    <original>K</original>
    <variation>R</variation>
    <location>
        <position position="103"/>
    </location>
</feature>
<feature type="sequence variant" description="In allele E." evidence="2">
    <original>L</original>
    <variation>V</variation>
    <location>
        <position position="124"/>
    </location>
</feature>
<feature type="helix" evidence="5">
    <location>
        <begin position="4"/>
        <end position="14"/>
    </location>
</feature>
<feature type="helix" evidence="5">
    <location>
        <begin position="19"/>
        <end position="33"/>
    </location>
</feature>
<feature type="helix" evidence="5">
    <location>
        <begin position="35"/>
        <end position="40"/>
    </location>
</feature>
<feature type="helix" evidence="5">
    <location>
        <begin position="42"/>
        <end position="44"/>
    </location>
</feature>
<feature type="helix" evidence="5">
    <location>
        <begin position="50"/>
        <end position="54"/>
    </location>
</feature>
<feature type="helix" evidence="5">
    <location>
        <begin position="57"/>
        <end position="73"/>
    </location>
</feature>
<feature type="helix" evidence="5">
    <location>
        <begin position="77"/>
        <end position="79"/>
    </location>
</feature>
<feature type="helix" evidence="5">
    <location>
        <begin position="80"/>
        <end position="83"/>
    </location>
</feature>
<feature type="helix" evidence="5">
    <location>
        <begin position="85"/>
        <end position="93"/>
    </location>
</feature>
<feature type="helix" evidence="5">
    <location>
        <begin position="100"/>
        <end position="117"/>
    </location>
</feature>
<feature type="helix" evidence="5">
    <location>
        <begin position="118"/>
        <end position="120"/>
    </location>
</feature>
<feature type="helix" evidence="5">
    <location>
        <begin position="123"/>
        <end position="141"/>
    </location>
</feature>
<feature type="helix" evidence="5">
    <location>
        <begin position="142"/>
        <end position="144"/>
    </location>
</feature>
<name>HBBA_CAPHI</name>
<comment type="function">
    <text>Involved in oxygen transport from the lung to the various peripheral tissues.</text>
</comment>
<comment type="subunit">
    <text>Heterotetramer of two alpha chains and two beta chains.</text>
</comment>
<comment type="tissue specificity">
    <text>Red blood cells.</text>
</comment>
<comment type="polymorphism">
    <text evidence="2 3 4">There are at least three alleles. The sequence shown is that of allele A.</text>
</comment>
<comment type="similarity">
    <text evidence="1">Belongs to the globin family.</text>
</comment>
<evidence type="ECO:0000255" key="1">
    <source>
        <dbReference type="PROSITE-ProRule" id="PRU00238"/>
    </source>
</evidence>
<evidence type="ECO:0000269" key="2">
    <source>
    </source>
</evidence>
<evidence type="ECO:0000269" key="3">
    <source>
    </source>
</evidence>
<evidence type="ECO:0000269" key="4">
    <source>
    </source>
</evidence>
<evidence type="ECO:0007829" key="5">
    <source>
        <dbReference type="PDB" id="3D1A"/>
    </source>
</evidence>
<dbReference type="EMBL" id="M15387">
    <property type="protein sequence ID" value="AAA30913.1"/>
    <property type="molecule type" value="Genomic_DNA"/>
</dbReference>
<dbReference type="EMBL" id="K00657">
    <property type="protein sequence ID" value="AAA30911.1"/>
    <property type="molecule type" value="Genomic_DNA"/>
</dbReference>
<dbReference type="EMBL" id="K00658">
    <property type="protein sequence ID" value="AAA30912.1"/>
    <property type="molecule type" value="Genomic_DNA"/>
</dbReference>
<dbReference type="PIR" id="A90817">
    <property type="entry name" value="HBGTA"/>
</dbReference>
<dbReference type="RefSeq" id="XP_005689872.2">
    <property type="nucleotide sequence ID" value="XM_005689815.3"/>
</dbReference>
<dbReference type="PDB" id="2RI4">
    <property type="method" value="X-ray"/>
    <property type="resolution" value="2.70 A"/>
    <property type="chains" value="B/D/J/L=1-145"/>
</dbReference>
<dbReference type="PDB" id="3D1A">
    <property type="method" value="X-ray"/>
    <property type="resolution" value="2.61 A"/>
    <property type="chains" value="B/D=1-145"/>
</dbReference>
<dbReference type="PDB" id="3EU1">
    <property type="method" value="X-ray"/>
    <property type="resolution" value="3.00 A"/>
    <property type="chains" value="B/D=1-145"/>
</dbReference>
<dbReference type="PDBsum" id="2RI4"/>
<dbReference type="PDBsum" id="3D1A"/>
<dbReference type="PDBsum" id="3EU1"/>
<dbReference type="SMR" id="P02077"/>
<dbReference type="STRING" id="9925.ENSCHIP00000018470"/>
<dbReference type="GeneID" id="102175876"/>
<dbReference type="KEGG" id="chx:102175876"/>
<dbReference type="OrthoDB" id="9886081at2759"/>
<dbReference type="EvolutionaryTrace" id="P02077"/>
<dbReference type="Proteomes" id="UP000291000">
    <property type="component" value="Unassembled WGS sequence"/>
</dbReference>
<dbReference type="Proteomes" id="UP000694566">
    <property type="component" value="Unplaced"/>
</dbReference>
<dbReference type="GO" id="GO:0072562">
    <property type="term" value="C:blood microparticle"/>
    <property type="evidence" value="ECO:0007669"/>
    <property type="project" value="TreeGrafter"/>
</dbReference>
<dbReference type="GO" id="GO:0031838">
    <property type="term" value="C:haptoglobin-hemoglobin complex"/>
    <property type="evidence" value="ECO:0007669"/>
    <property type="project" value="TreeGrafter"/>
</dbReference>
<dbReference type="GO" id="GO:0005833">
    <property type="term" value="C:hemoglobin complex"/>
    <property type="evidence" value="ECO:0007669"/>
    <property type="project" value="InterPro"/>
</dbReference>
<dbReference type="GO" id="GO:0031720">
    <property type="term" value="F:haptoglobin binding"/>
    <property type="evidence" value="ECO:0007669"/>
    <property type="project" value="TreeGrafter"/>
</dbReference>
<dbReference type="GO" id="GO:0020037">
    <property type="term" value="F:heme binding"/>
    <property type="evidence" value="ECO:0007669"/>
    <property type="project" value="InterPro"/>
</dbReference>
<dbReference type="GO" id="GO:0031721">
    <property type="term" value="F:hemoglobin alpha binding"/>
    <property type="evidence" value="ECO:0007669"/>
    <property type="project" value="TreeGrafter"/>
</dbReference>
<dbReference type="GO" id="GO:0046872">
    <property type="term" value="F:metal ion binding"/>
    <property type="evidence" value="ECO:0007669"/>
    <property type="project" value="UniProtKB-KW"/>
</dbReference>
<dbReference type="GO" id="GO:0043177">
    <property type="term" value="F:organic acid binding"/>
    <property type="evidence" value="ECO:0007669"/>
    <property type="project" value="TreeGrafter"/>
</dbReference>
<dbReference type="GO" id="GO:0019825">
    <property type="term" value="F:oxygen binding"/>
    <property type="evidence" value="ECO:0007669"/>
    <property type="project" value="InterPro"/>
</dbReference>
<dbReference type="GO" id="GO:0005344">
    <property type="term" value="F:oxygen carrier activity"/>
    <property type="evidence" value="ECO:0007669"/>
    <property type="project" value="UniProtKB-KW"/>
</dbReference>
<dbReference type="GO" id="GO:0004601">
    <property type="term" value="F:peroxidase activity"/>
    <property type="evidence" value="ECO:0007669"/>
    <property type="project" value="TreeGrafter"/>
</dbReference>
<dbReference type="GO" id="GO:0042744">
    <property type="term" value="P:hydrogen peroxide catabolic process"/>
    <property type="evidence" value="ECO:0007669"/>
    <property type="project" value="TreeGrafter"/>
</dbReference>
<dbReference type="CDD" id="cd08925">
    <property type="entry name" value="Hb-beta-like"/>
    <property type="match status" value="1"/>
</dbReference>
<dbReference type="FunFam" id="1.10.490.10:FF:000001">
    <property type="entry name" value="Hemoglobin subunit beta"/>
    <property type="match status" value="1"/>
</dbReference>
<dbReference type="Gene3D" id="1.10.490.10">
    <property type="entry name" value="Globins"/>
    <property type="match status" value="1"/>
</dbReference>
<dbReference type="InterPro" id="IPR000971">
    <property type="entry name" value="Globin"/>
</dbReference>
<dbReference type="InterPro" id="IPR009050">
    <property type="entry name" value="Globin-like_sf"/>
</dbReference>
<dbReference type="InterPro" id="IPR012292">
    <property type="entry name" value="Globin/Proto"/>
</dbReference>
<dbReference type="InterPro" id="IPR002337">
    <property type="entry name" value="Hemoglobin_b"/>
</dbReference>
<dbReference type="InterPro" id="IPR050056">
    <property type="entry name" value="Hemoglobin_oxygen_transport"/>
</dbReference>
<dbReference type="PANTHER" id="PTHR11442">
    <property type="entry name" value="HEMOGLOBIN FAMILY MEMBER"/>
    <property type="match status" value="1"/>
</dbReference>
<dbReference type="PANTHER" id="PTHR11442:SF42">
    <property type="entry name" value="HEMOGLOBIN SUBUNIT BETA"/>
    <property type="match status" value="1"/>
</dbReference>
<dbReference type="Pfam" id="PF00042">
    <property type="entry name" value="Globin"/>
    <property type="match status" value="1"/>
</dbReference>
<dbReference type="PRINTS" id="PR00814">
    <property type="entry name" value="BETAHAEM"/>
</dbReference>
<dbReference type="SUPFAM" id="SSF46458">
    <property type="entry name" value="Globin-like"/>
    <property type="match status" value="1"/>
</dbReference>
<dbReference type="PROSITE" id="PS01033">
    <property type="entry name" value="GLOBIN"/>
    <property type="match status" value="1"/>
</dbReference>
<sequence>MLTAEEKAAVTGFWGKVKVDEVGAEALGRLLVVYPWTQRFFEHFGDLSSADAVMNNAKVKAHGKKVLDSFSNGMKHLDDLKGTFAQLSELHCDKLHVDPENFKLLGNVLVVVLARHHGSEFTPLLQAEFQKVVAGVANALAHRYH</sequence>
<keyword id="KW-0002">3D-structure</keyword>
<keyword id="KW-0903">Direct protein sequencing</keyword>
<keyword id="KW-0349">Heme</keyword>
<keyword id="KW-0408">Iron</keyword>
<keyword id="KW-0479">Metal-binding</keyword>
<keyword id="KW-0561">Oxygen transport</keyword>
<keyword id="KW-1185">Reference proteome</keyword>
<keyword id="KW-0813">Transport</keyword>
<organism>
    <name type="scientific">Capra hircus</name>
    <name type="common">Goat</name>
    <dbReference type="NCBI Taxonomy" id="9925"/>
    <lineage>
        <taxon>Eukaryota</taxon>
        <taxon>Metazoa</taxon>
        <taxon>Chordata</taxon>
        <taxon>Craniata</taxon>
        <taxon>Vertebrata</taxon>
        <taxon>Euteleostomi</taxon>
        <taxon>Mammalia</taxon>
        <taxon>Eutheria</taxon>
        <taxon>Laurasiatheria</taxon>
        <taxon>Artiodactyla</taxon>
        <taxon>Ruminantia</taxon>
        <taxon>Pecora</taxon>
        <taxon>Bovidae</taxon>
        <taxon>Caprinae</taxon>
        <taxon>Capra</taxon>
    </lineage>
</organism>
<accession>P02077</accession>
<accession>P79429</accession>
<proteinExistence type="evidence at protein level"/>
<reference key="1">
    <citation type="journal article" date="1981" name="Cell">
        <title>Structure and evolution of goat gamma-, beta C- and beta A-globin genes: three developmentally regulated genes contain inserted elements.</title>
        <authorList>
            <person name="Schon E.A."/>
            <person name="Cleary M.L."/>
            <person name="Haynes J.R."/>
            <person name="Lingrel J.B."/>
        </authorList>
    </citation>
    <scope>NUCLEOTIDE SEQUENCE [GENOMIC DNA]</scope>
</reference>
<reference key="2">
    <citation type="journal article" date="1967" name="J. Biol. Chem.">
        <title>The structure of goat hemoglobins. I. Structural studies of the beta chains of the hemoglobins of normal and anemic goats.</title>
        <authorList>
            <person name="Huisman T.H.J."/>
            <person name="Adams H.R."/>
            <person name="Dimmock M.O."/>
            <person name="Edwards W.E."/>
            <person name="Wilson J.B."/>
        </authorList>
    </citation>
    <scope>PARTIAL PROTEIN SEQUENCE (ALLELE A)</scope>
</reference>
<reference key="3">
    <citation type="journal article" date="1968" name="Arch. Biochem. Biophys.">
        <title>The structure of goat hemoglobins. 3. Hemoglobin D, a beta chain variant with one apparent amino acid substitution (21 Asp--&gt;His).</title>
        <authorList>
            <person name="Adams H.R."/>
            <person name="Boyd E.M."/>
            <person name="Wilson J.B."/>
            <person name="Miller A."/>
            <person name="Huisman T.H.J."/>
        </authorList>
    </citation>
    <scope>PARTIAL PROTEIN SEQUENCE (ALLELE D)</scope>
</reference>
<reference key="4">
    <citation type="journal article" date="1970" name="Arch. Biochem. Biophys.">
        <title>The structure of goat hemoglobins. IV. A third beta chain variant (betaE) with three apparent amino acid substitutions.</title>
        <authorList>
            <person name="Wrightstone R.N."/>
            <person name="Wilson J.B."/>
            <person name="Miller A."/>
            <person name="Huisman T.H.J."/>
        </authorList>
    </citation>
    <scope>PARTIAL PROTEIN SEQUENCE (ALLELE E)</scope>
</reference>
<reference key="5">
    <citation type="journal article" date="1980" name="J. Biol. Chem.">
        <title>The isolation of the beta A-, beta C-, and gamma-globin genes and a presumptive embryonic globin gene from a goat DNA recombinant library.</title>
        <authorList>
            <person name="Haynes J.R."/>
            <person name="Rosteck P.R. Jr."/>
            <person name="Schon E.A."/>
            <person name="Gallagher P.M."/>
            <person name="Burks D.J."/>
            <person name="Smith K."/>
            <person name="Lingrel J.B."/>
        </authorList>
    </citation>
    <scope>NUCLEOTIDE SEQUENCE [GENOMIC DNA] OF 64-97 AND 114-119</scope>
</reference>